<keyword id="KW-0025">Alternative splicing</keyword>
<keyword id="KW-0238">DNA-binding</keyword>
<keyword id="KW-0479">Metal-binding</keyword>
<keyword id="KW-0539">Nucleus</keyword>
<keyword id="KW-0675">Receptor</keyword>
<keyword id="KW-1185">Reference proteome</keyword>
<keyword id="KW-0804">Transcription</keyword>
<keyword id="KW-0805">Transcription regulation</keyword>
<keyword id="KW-0862">Zinc</keyword>
<keyword id="KW-0863">Zinc-finger</keyword>
<reference key="1">
    <citation type="journal article" date="1991" name="Mol. Endocrinol.">
        <title>Isolation and characterization of mouse complementary DNAs encoding alpha and beta thyroid hormone receptors from thyrotrope cells: the mouse pituitary-specific beta 2 isoform differs at the amino terminus from the corresponding species from rat pituitary tumor cells.</title>
        <authorList>
            <person name="Wood W.M."/>
            <person name="Ocran K.W."/>
            <person name="Gordon D.F."/>
            <person name="Ridgway E.C."/>
        </authorList>
    </citation>
    <scope>NUCLEOTIDE SEQUENCE [MRNA] (ISOFORMS BETA-1 AND BETA-2)</scope>
    <source>
        <tissue>Thyroid</tissue>
    </source>
</reference>
<reference key="2">
    <citation type="journal article" date="1994" name="Mol. Endocrinol.">
        <title>Structural and functional characterization of the genomic locus encoding the murine beta 2 thyroid hormone receptor.</title>
        <authorList>
            <person name="Wood W.M."/>
            <person name="Dowding J.M."/>
            <person name="Haugen B.R."/>
            <person name="Bright T.M."/>
            <person name="Gordon D.F."/>
            <person name="Ridgway E.C."/>
        </authorList>
    </citation>
    <scope>NUCLEOTIDE SEQUENCE [GENOMIC DNA]</scope>
    <source>
        <strain>DBA/2J</strain>
        <tissue>Liver</tissue>
    </source>
</reference>
<reference key="3">
    <citation type="journal article" date="2005" name="Science">
        <title>The transcriptional landscape of the mammalian genome.</title>
        <authorList>
            <person name="Carninci P."/>
            <person name="Kasukawa T."/>
            <person name="Katayama S."/>
            <person name="Gough J."/>
            <person name="Frith M.C."/>
            <person name="Maeda N."/>
            <person name="Oyama R."/>
            <person name="Ravasi T."/>
            <person name="Lenhard B."/>
            <person name="Wells C."/>
            <person name="Kodzius R."/>
            <person name="Shimokawa K."/>
            <person name="Bajic V.B."/>
            <person name="Brenner S.E."/>
            <person name="Batalov S."/>
            <person name="Forrest A.R."/>
            <person name="Zavolan M."/>
            <person name="Davis M.J."/>
            <person name="Wilming L.G."/>
            <person name="Aidinis V."/>
            <person name="Allen J.E."/>
            <person name="Ambesi-Impiombato A."/>
            <person name="Apweiler R."/>
            <person name="Aturaliya R.N."/>
            <person name="Bailey T.L."/>
            <person name="Bansal M."/>
            <person name="Baxter L."/>
            <person name="Beisel K.W."/>
            <person name="Bersano T."/>
            <person name="Bono H."/>
            <person name="Chalk A.M."/>
            <person name="Chiu K.P."/>
            <person name="Choudhary V."/>
            <person name="Christoffels A."/>
            <person name="Clutterbuck D.R."/>
            <person name="Crowe M.L."/>
            <person name="Dalla E."/>
            <person name="Dalrymple B.P."/>
            <person name="de Bono B."/>
            <person name="Della Gatta G."/>
            <person name="di Bernardo D."/>
            <person name="Down T."/>
            <person name="Engstrom P."/>
            <person name="Fagiolini M."/>
            <person name="Faulkner G."/>
            <person name="Fletcher C.F."/>
            <person name="Fukushima T."/>
            <person name="Furuno M."/>
            <person name="Futaki S."/>
            <person name="Gariboldi M."/>
            <person name="Georgii-Hemming P."/>
            <person name="Gingeras T.R."/>
            <person name="Gojobori T."/>
            <person name="Green R.E."/>
            <person name="Gustincich S."/>
            <person name="Harbers M."/>
            <person name="Hayashi Y."/>
            <person name="Hensch T.K."/>
            <person name="Hirokawa N."/>
            <person name="Hill D."/>
            <person name="Huminiecki L."/>
            <person name="Iacono M."/>
            <person name="Ikeo K."/>
            <person name="Iwama A."/>
            <person name="Ishikawa T."/>
            <person name="Jakt M."/>
            <person name="Kanapin A."/>
            <person name="Katoh M."/>
            <person name="Kawasawa Y."/>
            <person name="Kelso J."/>
            <person name="Kitamura H."/>
            <person name="Kitano H."/>
            <person name="Kollias G."/>
            <person name="Krishnan S.P."/>
            <person name="Kruger A."/>
            <person name="Kummerfeld S.K."/>
            <person name="Kurochkin I.V."/>
            <person name="Lareau L.F."/>
            <person name="Lazarevic D."/>
            <person name="Lipovich L."/>
            <person name="Liu J."/>
            <person name="Liuni S."/>
            <person name="McWilliam S."/>
            <person name="Madan Babu M."/>
            <person name="Madera M."/>
            <person name="Marchionni L."/>
            <person name="Matsuda H."/>
            <person name="Matsuzawa S."/>
            <person name="Miki H."/>
            <person name="Mignone F."/>
            <person name="Miyake S."/>
            <person name="Morris K."/>
            <person name="Mottagui-Tabar S."/>
            <person name="Mulder N."/>
            <person name="Nakano N."/>
            <person name="Nakauchi H."/>
            <person name="Ng P."/>
            <person name="Nilsson R."/>
            <person name="Nishiguchi S."/>
            <person name="Nishikawa S."/>
            <person name="Nori F."/>
            <person name="Ohara O."/>
            <person name="Okazaki Y."/>
            <person name="Orlando V."/>
            <person name="Pang K.C."/>
            <person name="Pavan W.J."/>
            <person name="Pavesi G."/>
            <person name="Pesole G."/>
            <person name="Petrovsky N."/>
            <person name="Piazza S."/>
            <person name="Reed J."/>
            <person name="Reid J.F."/>
            <person name="Ring B.Z."/>
            <person name="Ringwald M."/>
            <person name="Rost B."/>
            <person name="Ruan Y."/>
            <person name="Salzberg S.L."/>
            <person name="Sandelin A."/>
            <person name="Schneider C."/>
            <person name="Schoenbach C."/>
            <person name="Sekiguchi K."/>
            <person name="Semple C.A."/>
            <person name="Seno S."/>
            <person name="Sessa L."/>
            <person name="Sheng Y."/>
            <person name="Shibata Y."/>
            <person name="Shimada H."/>
            <person name="Shimada K."/>
            <person name="Silva D."/>
            <person name="Sinclair B."/>
            <person name="Sperling S."/>
            <person name="Stupka E."/>
            <person name="Sugiura K."/>
            <person name="Sultana R."/>
            <person name="Takenaka Y."/>
            <person name="Taki K."/>
            <person name="Tammoja K."/>
            <person name="Tan S.L."/>
            <person name="Tang S."/>
            <person name="Taylor M.S."/>
            <person name="Tegner J."/>
            <person name="Teichmann S.A."/>
            <person name="Ueda H.R."/>
            <person name="van Nimwegen E."/>
            <person name="Verardo R."/>
            <person name="Wei C.L."/>
            <person name="Yagi K."/>
            <person name="Yamanishi H."/>
            <person name="Zabarovsky E."/>
            <person name="Zhu S."/>
            <person name="Zimmer A."/>
            <person name="Hide W."/>
            <person name="Bult C."/>
            <person name="Grimmond S.M."/>
            <person name="Teasdale R.D."/>
            <person name="Liu E.T."/>
            <person name="Brusic V."/>
            <person name="Quackenbush J."/>
            <person name="Wahlestedt C."/>
            <person name="Mattick J.S."/>
            <person name="Hume D.A."/>
            <person name="Kai C."/>
            <person name="Sasaki D."/>
            <person name="Tomaru Y."/>
            <person name="Fukuda S."/>
            <person name="Kanamori-Katayama M."/>
            <person name="Suzuki M."/>
            <person name="Aoki J."/>
            <person name="Arakawa T."/>
            <person name="Iida J."/>
            <person name="Imamura K."/>
            <person name="Itoh M."/>
            <person name="Kato T."/>
            <person name="Kawaji H."/>
            <person name="Kawagashira N."/>
            <person name="Kawashima T."/>
            <person name="Kojima M."/>
            <person name="Kondo S."/>
            <person name="Konno H."/>
            <person name="Nakano K."/>
            <person name="Ninomiya N."/>
            <person name="Nishio T."/>
            <person name="Okada M."/>
            <person name="Plessy C."/>
            <person name="Shibata K."/>
            <person name="Shiraki T."/>
            <person name="Suzuki S."/>
            <person name="Tagami M."/>
            <person name="Waki K."/>
            <person name="Watahiki A."/>
            <person name="Okamura-Oho Y."/>
            <person name="Suzuki H."/>
            <person name="Kawai J."/>
            <person name="Hayashizaki Y."/>
        </authorList>
    </citation>
    <scope>NUCLEOTIDE SEQUENCE [LARGE SCALE MRNA] (ISOFORM BETA-1)</scope>
    <source>
        <strain>C57BL/6J</strain>
        <tissue>Visual cortex</tissue>
    </source>
</reference>
<reference key="4">
    <citation type="journal article" date="2004" name="Genome Res.">
        <title>The status, quality, and expansion of the NIH full-length cDNA project: the Mammalian Gene Collection (MGC).</title>
        <authorList>
            <consortium name="The MGC Project Team"/>
        </authorList>
    </citation>
    <scope>NUCLEOTIDE SEQUENCE [LARGE SCALE MRNA] (ISOFORM BETA-2)</scope>
    <source>
        <strain>C57BL/6J</strain>
        <tissue>Eye</tissue>
    </source>
</reference>
<reference key="5">
    <citation type="journal article" date="1997" name="Proc. Natl. Acad. Sci. U.S.A.">
        <title>Cloning and characterization of a corepressor and potential component of the nuclear hormone receptor repression complex.</title>
        <authorList>
            <person name="Zamir I."/>
            <person name="Dawson J."/>
            <person name="Lavinsky R.M."/>
            <person name="Glass C.K."/>
            <person name="Rosenfeld M.G."/>
            <person name="Lazar M.A."/>
        </authorList>
    </citation>
    <scope>INTERACTION WITH C1D</scope>
</reference>
<protein>
    <recommendedName>
        <fullName>Thyroid hormone receptor beta</fullName>
    </recommendedName>
    <alternativeName>
        <fullName>Nuclear receptor subfamily 1 group A member 2</fullName>
    </alternativeName>
    <alternativeName>
        <fullName>c-erbA-2</fullName>
    </alternativeName>
    <alternativeName>
        <fullName>c-erbA-beta</fullName>
    </alternativeName>
</protein>
<sequence>MTPNSMTENGLPAWDKQKPRPDRGQDWKLVGMSEACLHRKSHVERRGALKNEQTSPHLIQATWTSSIFHLDPDDVNDQSISSAQTFQTEEKKCKGYIPSYLDKDELCVVCGDKATGYHYRCITCEGCKGFFRRTIQKSLHPSYSCKYEGKCIIDKVTRNQCQECRFKKCIYVGMATDLVLDDSKRLAKRKLIEENREKRRREELQKSIGHKPEPTDEEWELIKTVTEAHVATNAQGSHWKQKRKFLPEDIGQAPIVNAPEGGKVDLEAFSHFTKIITPAITRVVDFAKKLPMFCELPCEDQIILLKGCCMEIMSLRAAVRYDPDSETLTLNGEMAVTRGQLKNGGLGVVSDAIFDLGMSLSSFNLDDTEVALLQAVLLMSSDRPGLACVERIEKYQDSFLLAFEHYINYRKHHVTHFWPKLLMKVTDLRMIGACHASRFLHMKVECPTELFPPLFLEVFED</sequence>
<proteinExistence type="evidence at protein level"/>
<comment type="function">
    <text>Nuclear hormone receptor that can act as a repressor or activator of transcription. High affinity receptor for thyroid hormones, including triiodothyronine and thyroxine.</text>
</comment>
<comment type="subunit">
    <text evidence="1 2">Binds DNA as a dimer; homodimer and heterodimer with RXRB. Interacts with the coactivators NCOA1/SRC1, NCOA2/GRIP1, NCOA7 and MED1/TRAP220 in a ligand-inducible manner. Interacts with the corepressor NCOR1 in absence of ligand (By similarity). Interacts with C1D. Interacts with NR2F6; the interaction impairs the binding of the THRB homodimer and THRB:RXRB heterodimer to T3 response elements. Interacts with PRMT2 and THRSP (By similarity). Interacts with TACC1; this interaction is decreased in the presence of thyroid hormone T3 (By similarity).</text>
</comment>
<comment type="interaction">
    <interactant intactId="EBI-6935043">
        <id>P37242</id>
    </interactant>
    <interactant intactId="EBI-6935014">
        <id>O08915</id>
        <label>Aip</label>
    </interactant>
    <organismsDiffer>false</organismsDiffer>
    <experiments>2</experiments>
</comment>
<comment type="subcellular location">
    <subcellularLocation>
        <location>Nucleus</location>
    </subcellularLocation>
</comment>
<comment type="alternative products">
    <event type="alternative splicing"/>
    <isoform>
        <id>P37242-1</id>
        <name>Beta-1</name>
        <sequence type="displayed"/>
    </isoform>
    <isoform>
        <id>P37242-2</id>
        <id>P37244-1</id>
        <name>Beta-2</name>
        <sequence type="described" ref="VSP_031078"/>
    </isoform>
</comment>
<comment type="domain">
    <text>Composed of three domains: a modulating N-terminal domain, a DNA-binding domain and a C-terminal ligand-binding domain.</text>
</comment>
<comment type="similarity">
    <text evidence="8">Belongs to the nuclear hormone receptor family. NR1 subfamily.</text>
</comment>
<gene>
    <name type="primary">Thrb</name>
    <name type="synonym">Erba2</name>
    <name type="synonym">Nr1a2</name>
</gene>
<organism>
    <name type="scientific">Mus musculus</name>
    <name type="common">Mouse</name>
    <dbReference type="NCBI Taxonomy" id="10090"/>
    <lineage>
        <taxon>Eukaryota</taxon>
        <taxon>Metazoa</taxon>
        <taxon>Chordata</taxon>
        <taxon>Craniata</taxon>
        <taxon>Vertebrata</taxon>
        <taxon>Euteleostomi</taxon>
        <taxon>Mammalia</taxon>
        <taxon>Eutheria</taxon>
        <taxon>Euarchontoglires</taxon>
        <taxon>Glires</taxon>
        <taxon>Rodentia</taxon>
        <taxon>Myomorpha</taxon>
        <taxon>Muroidea</taxon>
        <taxon>Muridae</taxon>
        <taxon>Murinae</taxon>
        <taxon>Mus</taxon>
        <taxon>Mus</taxon>
    </lineage>
</organism>
<accession>P37242</accession>
<accession>P37244</accession>
<accession>Q0VDR8</accession>
<accession>Q3TY80</accession>
<dbReference type="EMBL" id="S62756">
    <property type="protein sequence ID" value="AAB20226.1"/>
    <property type="molecule type" value="mRNA"/>
</dbReference>
<dbReference type="EMBL" id="S62758">
    <property type="protein sequence ID" value="AAB20227.1"/>
    <property type="molecule type" value="mRNA"/>
</dbReference>
<dbReference type="EMBL" id="U15548">
    <property type="protein sequence ID" value="AAA86957.1"/>
    <property type="molecule type" value="Genomic_DNA"/>
</dbReference>
<dbReference type="EMBL" id="U15542">
    <property type="protein sequence ID" value="AAA86957.1"/>
    <property type="status" value="JOINED"/>
    <property type="molecule type" value="Genomic_DNA"/>
</dbReference>
<dbReference type="EMBL" id="U15543">
    <property type="protein sequence ID" value="AAA86957.1"/>
    <property type="status" value="JOINED"/>
    <property type="molecule type" value="Genomic_DNA"/>
</dbReference>
<dbReference type="EMBL" id="U15544">
    <property type="protein sequence ID" value="AAA86957.1"/>
    <property type="status" value="JOINED"/>
    <property type="molecule type" value="Genomic_DNA"/>
</dbReference>
<dbReference type="EMBL" id="U15545">
    <property type="protein sequence ID" value="AAA86957.1"/>
    <property type="status" value="JOINED"/>
    <property type="molecule type" value="Genomic_DNA"/>
</dbReference>
<dbReference type="EMBL" id="U15546">
    <property type="protein sequence ID" value="AAA86957.1"/>
    <property type="status" value="JOINED"/>
    <property type="molecule type" value="Genomic_DNA"/>
</dbReference>
<dbReference type="EMBL" id="U15547">
    <property type="protein sequence ID" value="AAA86957.1"/>
    <property type="status" value="JOINED"/>
    <property type="molecule type" value="Genomic_DNA"/>
</dbReference>
<dbReference type="EMBL" id="AK158826">
    <property type="protein sequence ID" value="BAE34683.1"/>
    <property type="molecule type" value="mRNA"/>
</dbReference>
<dbReference type="EMBL" id="BC089035">
    <property type="protein sequence ID" value="AAH89035.1"/>
    <property type="molecule type" value="mRNA"/>
</dbReference>
<dbReference type="EMBL" id="BC119552">
    <property type="protein sequence ID" value="AAI19553.1"/>
    <property type="molecule type" value="mRNA"/>
</dbReference>
<dbReference type="EMBL" id="BC119553">
    <property type="protein sequence ID" value="AAI19554.1"/>
    <property type="molecule type" value="mRNA"/>
</dbReference>
<dbReference type="CCDS" id="CCDS26835.1">
    <molecule id="P37242-2"/>
</dbReference>
<dbReference type="CCDS" id="CCDS49404.1">
    <molecule id="P37242-1"/>
</dbReference>
<dbReference type="PIR" id="A40377">
    <property type="entry name" value="A40377"/>
</dbReference>
<dbReference type="PIR" id="A57035">
    <property type="entry name" value="A57035"/>
</dbReference>
<dbReference type="RefSeq" id="NP_001106888.1">
    <molecule id="P37242-1"/>
    <property type="nucleotide sequence ID" value="NM_001113417.2"/>
</dbReference>
<dbReference type="RefSeq" id="NP_001411593.1">
    <molecule id="P37242-1"/>
    <property type="nucleotide sequence ID" value="NM_001424664.1"/>
</dbReference>
<dbReference type="RefSeq" id="NP_001411594.1">
    <molecule id="P37242-1"/>
    <property type="nucleotide sequence ID" value="NM_001424665.1"/>
</dbReference>
<dbReference type="RefSeq" id="NP_001411595.1">
    <molecule id="P37242-1"/>
    <property type="nucleotide sequence ID" value="NM_001424666.1"/>
</dbReference>
<dbReference type="RefSeq" id="NP_001411596.1">
    <molecule id="P37242-1"/>
    <property type="nucleotide sequence ID" value="NM_001424667.1"/>
</dbReference>
<dbReference type="RefSeq" id="NP_001411597.1">
    <molecule id="P37242-1"/>
    <property type="nucleotide sequence ID" value="NM_001424668.1"/>
</dbReference>
<dbReference type="RefSeq" id="NP_033406.1">
    <molecule id="P37242-2"/>
    <property type="nucleotide sequence ID" value="NM_009380.3"/>
</dbReference>
<dbReference type="RefSeq" id="XP_006518029.1">
    <property type="nucleotide sequence ID" value="XM_006517966.2"/>
</dbReference>
<dbReference type="RefSeq" id="XP_006518030.1">
    <molecule id="P37242-1"/>
    <property type="nucleotide sequence ID" value="XM_006517967.5"/>
</dbReference>
<dbReference type="RefSeq" id="XP_006518031.1">
    <property type="nucleotide sequence ID" value="XM_006517968.3"/>
</dbReference>
<dbReference type="RefSeq" id="XP_006518033.1">
    <molecule id="P37242-1"/>
    <property type="nucleotide sequence ID" value="XM_006517970.5"/>
</dbReference>
<dbReference type="RefSeq" id="XP_006518034.1">
    <molecule id="P37242-1"/>
    <property type="nucleotide sequence ID" value="XM_006517971.5"/>
</dbReference>
<dbReference type="RefSeq" id="XP_006518035.1">
    <molecule id="P37242-1"/>
    <property type="nucleotide sequence ID" value="XM_006517972.5"/>
</dbReference>
<dbReference type="RefSeq" id="XP_011243039.1">
    <molecule id="P37242-1"/>
    <property type="nucleotide sequence ID" value="XM_011244737.3"/>
</dbReference>
<dbReference type="RefSeq" id="XP_011243040.1">
    <property type="nucleotide sequence ID" value="XM_011244738.2"/>
</dbReference>
<dbReference type="RefSeq" id="XP_011243041.1">
    <property type="nucleotide sequence ID" value="XM_011244739.2"/>
</dbReference>
<dbReference type="RefSeq" id="XP_011243042.1">
    <molecule id="P37242-1"/>
    <property type="nucleotide sequence ID" value="XM_011244740.4"/>
</dbReference>
<dbReference type="RefSeq" id="XP_011243043.1">
    <molecule id="P37242-1"/>
    <property type="nucleotide sequence ID" value="XM_011244741.4"/>
</dbReference>
<dbReference type="RefSeq" id="XP_011243044.1">
    <molecule id="P37242-1"/>
    <property type="nucleotide sequence ID" value="XM_011244742.3"/>
</dbReference>
<dbReference type="RefSeq" id="XP_011243045.1">
    <molecule id="P37242-1"/>
    <property type="nucleotide sequence ID" value="XM_011244743.4"/>
</dbReference>
<dbReference type="RefSeq" id="XP_017171435.1">
    <property type="nucleotide sequence ID" value="XM_017315946.1"/>
</dbReference>
<dbReference type="RefSeq" id="XP_017171436.1">
    <property type="nucleotide sequence ID" value="XM_017315947.1"/>
</dbReference>
<dbReference type="RefSeq" id="XP_030103580.1">
    <molecule id="P37242-1"/>
    <property type="nucleotide sequence ID" value="XM_030247720.2"/>
</dbReference>
<dbReference type="RefSeq" id="XP_036014429.1">
    <molecule id="P37242-1"/>
    <property type="nucleotide sequence ID" value="XM_036158536.1"/>
</dbReference>
<dbReference type="RefSeq" id="XP_036014430.1">
    <molecule id="P37242-1"/>
    <property type="nucleotide sequence ID" value="XM_036158537.1"/>
</dbReference>
<dbReference type="SMR" id="P37242"/>
<dbReference type="BioGRID" id="204184">
    <property type="interactions" value="117"/>
</dbReference>
<dbReference type="ComplexPortal" id="CPX-710">
    <property type="entry name" value="RXRalpha-TRbeta nuclear hormone receptor complex"/>
</dbReference>
<dbReference type="CORUM" id="P37242"/>
<dbReference type="DIP" id="DIP-43750N"/>
<dbReference type="FunCoup" id="P37242">
    <property type="interactions" value="2501"/>
</dbReference>
<dbReference type="IntAct" id="P37242">
    <property type="interactions" value="5"/>
</dbReference>
<dbReference type="MINT" id="P37242"/>
<dbReference type="STRING" id="10090.ENSMUSP00000022304"/>
<dbReference type="iPTMnet" id="P37242"/>
<dbReference type="PhosphoSitePlus" id="P37242"/>
<dbReference type="PaxDb" id="10090-ENSMUSP00000022304"/>
<dbReference type="ProteomicsDB" id="262913">
    <molecule id="P37242-1"/>
</dbReference>
<dbReference type="ProteomicsDB" id="262914">
    <molecule id="P37242-2"/>
</dbReference>
<dbReference type="ABCD" id="P37242">
    <property type="antibodies" value="3 sequenced antibodies"/>
</dbReference>
<dbReference type="Antibodypedia" id="4548">
    <property type="antibodies" value="494 antibodies from 43 providers"/>
</dbReference>
<dbReference type="DNASU" id="21834"/>
<dbReference type="Ensembl" id="ENSMUST00000022303.17">
    <molecule id="P37242-1"/>
    <property type="protein sequence ID" value="ENSMUSP00000022303.10"/>
    <property type="gene ID" value="ENSMUSG00000021779.20"/>
</dbReference>
<dbReference type="Ensembl" id="ENSMUST00000022304.12">
    <molecule id="P37242-2"/>
    <property type="protein sequence ID" value="ENSMUSP00000022304.11"/>
    <property type="gene ID" value="ENSMUSG00000021779.20"/>
</dbReference>
<dbReference type="Ensembl" id="ENSMUST00000091471.12">
    <molecule id="P37242-1"/>
    <property type="protein sequence ID" value="ENSMUSP00000089053.5"/>
    <property type="gene ID" value="ENSMUSG00000021779.20"/>
</dbReference>
<dbReference type="GeneID" id="21834"/>
<dbReference type="KEGG" id="mmu:21834"/>
<dbReference type="UCSC" id="uc007shk.2">
    <molecule id="P37242-1"/>
    <property type="organism name" value="mouse"/>
</dbReference>
<dbReference type="UCSC" id="uc007sho.2">
    <molecule id="P37242-2"/>
    <property type="organism name" value="mouse"/>
</dbReference>
<dbReference type="AGR" id="MGI:98743"/>
<dbReference type="CTD" id="7068"/>
<dbReference type="MGI" id="MGI:98743">
    <property type="gene designation" value="Thrb"/>
</dbReference>
<dbReference type="VEuPathDB" id="HostDB:ENSMUSG00000021779"/>
<dbReference type="eggNOG" id="KOG3575">
    <property type="taxonomic scope" value="Eukaryota"/>
</dbReference>
<dbReference type="GeneTree" id="ENSGT00940000156809"/>
<dbReference type="HOGENOM" id="CLU_007368_18_2_1"/>
<dbReference type="InParanoid" id="P37242"/>
<dbReference type="OMA" id="AASSNCY"/>
<dbReference type="OrthoDB" id="10841at9989"/>
<dbReference type="PhylomeDB" id="P37242"/>
<dbReference type="TreeFam" id="TF328382"/>
<dbReference type="Reactome" id="R-MMU-383280">
    <property type="pathway name" value="Nuclear Receptor transcription pathway"/>
</dbReference>
<dbReference type="Reactome" id="R-MMU-4090294">
    <property type="pathway name" value="SUMOylation of intracellular receptors"/>
</dbReference>
<dbReference type="BioGRID-ORCS" id="21834">
    <property type="hits" value="4 hits in 82 CRISPR screens"/>
</dbReference>
<dbReference type="ChiTaRS" id="Thrb">
    <property type="organism name" value="mouse"/>
</dbReference>
<dbReference type="PRO" id="PR:P37242"/>
<dbReference type="Proteomes" id="UP000000589">
    <property type="component" value="Chromosome 14"/>
</dbReference>
<dbReference type="RNAct" id="P37242">
    <property type="molecule type" value="protein"/>
</dbReference>
<dbReference type="Bgee" id="ENSMUSG00000021779">
    <property type="expression patterns" value="Expressed in auditory system and 85 other cell types or tissues"/>
</dbReference>
<dbReference type="ExpressionAtlas" id="P37242">
    <property type="expression patterns" value="baseline and differential"/>
</dbReference>
<dbReference type="GO" id="GO:0016604">
    <property type="term" value="C:nuclear body"/>
    <property type="evidence" value="ECO:0007669"/>
    <property type="project" value="Ensembl"/>
</dbReference>
<dbReference type="GO" id="GO:0005634">
    <property type="term" value="C:nucleus"/>
    <property type="evidence" value="ECO:0000314"/>
    <property type="project" value="MGI"/>
</dbReference>
<dbReference type="GO" id="GO:0090575">
    <property type="term" value="C:RNA polymerase II transcription regulator complex"/>
    <property type="evidence" value="ECO:0000266"/>
    <property type="project" value="ComplexPortal"/>
</dbReference>
<dbReference type="GO" id="GO:0003682">
    <property type="term" value="F:chromatin binding"/>
    <property type="evidence" value="ECO:0000314"/>
    <property type="project" value="MGI"/>
</dbReference>
<dbReference type="GO" id="GO:0031490">
    <property type="term" value="F:chromatin DNA binding"/>
    <property type="evidence" value="ECO:0000314"/>
    <property type="project" value="MGI"/>
</dbReference>
<dbReference type="GO" id="GO:0003700">
    <property type="term" value="F:DNA-binding transcription factor activity"/>
    <property type="evidence" value="ECO:0000304"/>
    <property type="project" value="MGI"/>
</dbReference>
<dbReference type="GO" id="GO:0019899">
    <property type="term" value="F:enzyme binding"/>
    <property type="evidence" value="ECO:0007669"/>
    <property type="project" value="Ensembl"/>
</dbReference>
<dbReference type="GO" id="GO:0004879">
    <property type="term" value="F:nuclear receptor activity"/>
    <property type="evidence" value="ECO:0000315"/>
    <property type="project" value="MGI"/>
</dbReference>
<dbReference type="GO" id="GO:1990837">
    <property type="term" value="F:sequence-specific double-stranded DNA binding"/>
    <property type="evidence" value="ECO:0007669"/>
    <property type="project" value="Ensembl"/>
</dbReference>
<dbReference type="GO" id="GO:0070324">
    <property type="term" value="F:thyroid hormone binding"/>
    <property type="evidence" value="ECO:0000250"/>
    <property type="project" value="UniProtKB"/>
</dbReference>
<dbReference type="GO" id="GO:0001223">
    <property type="term" value="F:transcription coactivator binding"/>
    <property type="evidence" value="ECO:0007669"/>
    <property type="project" value="Ensembl"/>
</dbReference>
<dbReference type="GO" id="GO:0008270">
    <property type="term" value="F:zinc ion binding"/>
    <property type="evidence" value="ECO:0007669"/>
    <property type="project" value="UniProtKB-KW"/>
</dbReference>
<dbReference type="GO" id="GO:0009887">
    <property type="term" value="P:animal organ morphogenesis"/>
    <property type="evidence" value="ECO:0000315"/>
    <property type="project" value="MGI"/>
</dbReference>
<dbReference type="GO" id="GO:0097067">
    <property type="term" value="P:cellular response to thyroid hormone stimulus"/>
    <property type="evidence" value="ECO:0007669"/>
    <property type="project" value="Ensembl"/>
</dbReference>
<dbReference type="GO" id="GO:0008050">
    <property type="term" value="P:female courtship behavior"/>
    <property type="evidence" value="ECO:0000315"/>
    <property type="project" value="MGI"/>
</dbReference>
<dbReference type="GO" id="GO:0042789">
    <property type="term" value="P:mRNA transcription by RNA polymerase II"/>
    <property type="evidence" value="ECO:0000266"/>
    <property type="project" value="ComplexPortal"/>
</dbReference>
<dbReference type="GO" id="GO:0045892">
    <property type="term" value="P:negative regulation of DNA-templated transcription"/>
    <property type="evidence" value="ECO:0000314"/>
    <property type="project" value="MGI"/>
</dbReference>
<dbReference type="GO" id="GO:0007621">
    <property type="term" value="P:negative regulation of female receptivity"/>
    <property type="evidence" value="ECO:0000315"/>
    <property type="project" value="MGI"/>
</dbReference>
<dbReference type="GO" id="GO:0000122">
    <property type="term" value="P:negative regulation of transcription by RNA polymerase II"/>
    <property type="evidence" value="ECO:0000316"/>
    <property type="project" value="MGI"/>
</dbReference>
<dbReference type="GO" id="GO:0002157">
    <property type="term" value="P:positive regulation of thyroid hormone receptor signaling pathway"/>
    <property type="evidence" value="ECO:0000266"/>
    <property type="project" value="ComplexPortal"/>
</dbReference>
<dbReference type="GO" id="GO:0045944">
    <property type="term" value="P:positive regulation of transcription by RNA polymerase II"/>
    <property type="evidence" value="ECO:0000316"/>
    <property type="project" value="MGI"/>
</dbReference>
<dbReference type="GO" id="GO:0006355">
    <property type="term" value="P:regulation of DNA-templated transcription"/>
    <property type="evidence" value="ECO:0000304"/>
    <property type="project" value="MGI"/>
</dbReference>
<dbReference type="GO" id="GO:0008016">
    <property type="term" value="P:regulation of heart contraction"/>
    <property type="evidence" value="ECO:0000315"/>
    <property type="project" value="MGI"/>
</dbReference>
<dbReference type="GO" id="GO:0006357">
    <property type="term" value="P:regulation of transcription by RNA polymerase II"/>
    <property type="evidence" value="ECO:0000316"/>
    <property type="project" value="MGI"/>
</dbReference>
<dbReference type="GO" id="GO:0097474">
    <property type="term" value="P:retinal cone cell apoptotic process"/>
    <property type="evidence" value="ECO:0000315"/>
    <property type="project" value="MGI"/>
</dbReference>
<dbReference type="GO" id="GO:0046549">
    <property type="term" value="P:retinal cone cell development"/>
    <property type="evidence" value="ECO:0000315"/>
    <property type="project" value="MGI"/>
</dbReference>
<dbReference type="GO" id="GO:0007605">
    <property type="term" value="P:sensory perception of sound"/>
    <property type="evidence" value="ECO:0000315"/>
    <property type="project" value="MGI"/>
</dbReference>
<dbReference type="GO" id="GO:0060509">
    <property type="term" value="P:type I pneumocyte differentiation"/>
    <property type="evidence" value="ECO:0000316"/>
    <property type="project" value="MGI"/>
</dbReference>
<dbReference type="CDD" id="cd06961">
    <property type="entry name" value="NR_DBD_TR"/>
    <property type="match status" value="1"/>
</dbReference>
<dbReference type="CDD" id="cd06935">
    <property type="entry name" value="NR_LBD_TR"/>
    <property type="match status" value="1"/>
</dbReference>
<dbReference type="FunFam" id="1.10.565.10:FF:000006">
    <property type="entry name" value="Thyroid hormone receptor beta 2"/>
    <property type="match status" value="1"/>
</dbReference>
<dbReference type="FunFam" id="3.30.50.10:FF:000011">
    <property type="entry name" value="Thyroid hormone receptor beta isoform"/>
    <property type="match status" value="1"/>
</dbReference>
<dbReference type="Gene3D" id="3.30.50.10">
    <property type="entry name" value="Erythroid Transcription Factor GATA-1, subunit A"/>
    <property type="match status" value="1"/>
</dbReference>
<dbReference type="Gene3D" id="1.10.565.10">
    <property type="entry name" value="Retinoid X Receptor"/>
    <property type="match status" value="1"/>
</dbReference>
<dbReference type="InterPro" id="IPR035500">
    <property type="entry name" value="NHR-like_dom_sf"/>
</dbReference>
<dbReference type="InterPro" id="IPR000536">
    <property type="entry name" value="Nucl_hrmn_rcpt_lig-bd"/>
</dbReference>
<dbReference type="InterPro" id="IPR050234">
    <property type="entry name" value="Nuclear_hormone_rcpt_NR1"/>
</dbReference>
<dbReference type="InterPro" id="IPR001723">
    <property type="entry name" value="Nuclear_hrmn_rcpt"/>
</dbReference>
<dbReference type="InterPro" id="IPR001728">
    <property type="entry name" value="ThyrH_rcpt"/>
</dbReference>
<dbReference type="InterPro" id="IPR001628">
    <property type="entry name" value="Znf_hrmn_rcpt"/>
</dbReference>
<dbReference type="InterPro" id="IPR013088">
    <property type="entry name" value="Znf_NHR/GATA"/>
</dbReference>
<dbReference type="PANTHER" id="PTHR24082">
    <property type="entry name" value="NUCLEAR HORMONE RECEPTOR"/>
    <property type="match status" value="1"/>
</dbReference>
<dbReference type="PANTHER" id="PTHR24082:SF210">
    <property type="entry name" value="THYROID HORMONE RECEPTOR BETA"/>
    <property type="match status" value="1"/>
</dbReference>
<dbReference type="Pfam" id="PF00104">
    <property type="entry name" value="Hormone_recep"/>
    <property type="match status" value="1"/>
</dbReference>
<dbReference type="Pfam" id="PF00105">
    <property type="entry name" value="zf-C4"/>
    <property type="match status" value="1"/>
</dbReference>
<dbReference type="PRINTS" id="PR00398">
    <property type="entry name" value="STRDHORMONER"/>
</dbReference>
<dbReference type="PRINTS" id="PR00047">
    <property type="entry name" value="STROIDFINGER"/>
</dbReference>
<dbReference type="PRINTS" id="PR00546">
    <property type="entry name" value="THYROIDHORMR"/>
</dbReference>
<dbReference type="SMART" id="SM00430">
    <property type="entry name" value="HOLI"/>
    <property type="match status" value="1"/>
</dbReference>
<dbReference type="SMART" id="SM00399">
    <property type="entry name" value="ZnF_C4"/>
    <property type="match status" value="1"/>
</dbReference>
<dbReference type="SUPFAM" id="SSF57716">
    <property type="entry name" value="Glucocorticoid receptor-like (DNA-binding domain)"/>
    <property type="match status" value="1"/>
</dbReference>
<dbReference type="SUPFAM" id="SSF48508">
    <property type="entry name" value="Nuclear receptor ligand-binding domain"/>
    <property type="match status" value="1"/>
</dbReference>
<dbReference type="PROSITE" id="PS51843">
    <property type="entry name" value="NR_LBD"/>
    <property type="match status" value="1"/>
</dbReference>
<dbReference type="PROSITE" id="PS00031">
    <property type="entry name" value="NUCLEAR_REC_DBD_1"/>
    <property type="match status" value="1"/>
</dbReference>
<dbReference type="PROSITE" id="PS51030">
    <property type="entry name" value="NUCLEAR_REC_DBD_2"/>
    <property type="match status" value="1"/>
</dbReference>
<name>THB_MOUSE</name>
<feature type="chain" id="PRO_0000053448" description="Thyroid hormone receptor beta">
    <location>
        <begin position="1"/>
        <end position="461"/>
    </location>
</feature>
<feature type="domain" description="NR LBD" evidence="4">
    <location>
        <begin position="217"/>
        <end position="461"/>
    </location>
</feature>
<feature type="DNA-binding region" description="Nuclear receptor" evidence="3">
    <location>
        <begin position="107"/>
        <end position="181"/>
    </location>
</feature>
<feature type="zinc finger region" description="NR C4-type" evidence="3">
    <location>
        <begin position="107"/>
        <end position="127"/>
    </location>
</feature>
<feature type="zinc finger region" description="NR C4-type" evidence="3">
    <location>
        <begin position="145"/>
        <end position="169"/>
    </location>
</feature>
<feature type="region of interest" description="Modulating">
    <location>
        <begin position="1"/>
        <end position="106"/>
    </location>
</feature>
<feature type="region of interest" description="Disordered" evidence="5">
    <location>
        <begin position="1"/>
        <end position="24"/>
    </location>
</feature>
<feature type="region of interest" description="Interaction with NR2F6" evidence="1">
    <location>
        <begin position="244"/>
        <end position="461"/>
    </location>
</feature>
<feature type="compositionally biased region" description="Basic and acidic residues" evidence="5">
    <location>
        <begin position="15"/>
        <end position="24"/>
    </location>
</feature>
<feature type="binding site" evidence="2">
    <location>
        <position position="107"/>
    </location>
    <ligand>
        <name>Zn(2+)</name>
        <dbReference type="ChEBI" id="CHEBI:29105"/>
        <label>1</label>
    </ligand>
</feature>
<feature type="binding site" evidence="2">
    <location>
        <position position="110"/>
    </location>
    <ligand>
        <name>Zn(2+)</name>
        <dbReference type="ChEBI" id="CHEBI:29105"/>
        <label>1</label>
    </ligand>
</feature>
<feature type="binding site" evidence="2">
    <location>
        <position position="124"/>
    </location>
    <ligand>
        <name>Zn(2+)</name>
        <dbReference type="ChEBI" id="CHEBI:29105"/>
        <label>1</label>
    </ligand>
</feature>
<feature type="binding site" evidence="2">
    <location>
        <position position="127"/>
    </location>
    <ligand>
        <name>Zn(2+)</name>
        <dbReference type="ChEBI" id="CHEBI:29105"/>
        <label>1</label>
    </ligand>
</feature>
<feature type="binding site" evidence="2">
    <location>
        <position position="145"/>
    </location>
    <ligand>
        <name>Zn(2+)</name>
        <dbReference type="ChEBI" id="CHEBI:29105"/>
        <label>2</label>
    </ligand>
</feature>
<feature type="binding site" evidence="2">
    <location>
        <position position="151"/>
    </location>
    <ligand>
        <name>Zn(2+)</name>
        <dbReference type="ChEBI" id="CHEBI:29105"/>
        <label>2</label>
    </ligand>
</feature>
<feature type="binding site" evidence="2">
    <location>
        <position position="161"/>
    </location>
    <ligand>
        <name>Zn(2+)</name>
        <dbReference type="ChEBI" id="CHEBI:29105"/>
        <label>2</label>
    </ligand>
</feature>
<feature type="binding site" evidence="2">
    <location>
        <position position="164"/>
    </location>
    <ligand>
        <name>Zn(2+)</name>
        <dbReference type="ChEBI" id="CHEBI:29105"/>
        <label>2</label>
    </ligand>
</feature>
<feature type="binding site" evidence="2">
    <location>
        <position position="282"/>
    </location>
    <ligand>
        <name>3,3',5-triiodo-L-thyronine</name>
        <dbReference type="ChEBI" id="CHEBI:533015"/>
    </ligand>
</feature>
<feature type="binding site" evidence="2">
    <location>
        <position position="282"/>
    </location>
    <ligand>
        <name>L-thyroxine</name>
        <dbReference type="ChEBI" id="CHEBI:58448"/>
    </ligand>
</feature>
<feature type="binding site" evidence="2">
    <location>
        <position position="331"/>
    </location>
    <ligand>
        <name>3,3',5-triiodo-L-thyronine</name>
        <dbReference type="ChEBI" id="CHEBI:533015"/>
    </ligand>
</feature>
<feature type="binding site" evidence="2">
    <location>
        <position position="331"/>
    </location>
    <ligand>
        <name>L-thyroxine</name>
        <dbReference type="ChEBI" id="CHEBI:58448"/>
    </ligand>
</feature>
<feature type="binding site" evidence="2">
    <location>
        <position position="435"/>
    </location>
    <ligand>
        <name>3,3',5-triiodo-L-thyronine</name>
        <dbReference type="ChEBI" id="CHEBI:533015"/>
        <label>1</label>
    </ligand>
</feature>
<feature type="binding site" evidence="2">
    <location>
        <position position="435"/>
    </location>
    <ligand>
        <name>L-thyroxine</name>
        <dbReference type="ChEBI" id="CHEBI:58448"/>
    </ligand>
</feature>
<feature type="splice variant" id="VSP_031078" description="In isoform Beta-2." evidence="6 7">
    <original>MTPNSMTENGLPAWDKQKPRPDRGQDWKLVGMSEACLHRKSHVERRGALKNEQTSPHLIQATWTSSIFHLDPDDVNDQSISSAQTFQTEEKKC</original>
    <variation>MNYCMPEVHEVCPAASSNCYMQVTDYLAYLEDSPALSGRDVQAVPSSSIYMEQAWAVNQPYTCSYPGNLFKSKDSDLDMALSQSSQPAHLPEEKPFPQVQSPPHSQK</variation>
    <location>
        <begin position="1"/>
        <end position="93"/>
    </location>
</feature>
<feature type="sequence conflict" description="In Ref. 3; BAE34683." evidence="8" ref="3">
    <original>E</original>
    <variation>G</variation>
    <location>
        <position position="445"/>
    </location>
</feature>
<evidence type="ECO:0000250" key="1"/>
<evidence type="ECO:0000250" key="2">
    <source>
        <dbReference type="UniProtKB" id="P10828"/>
    </source>
</evidence>
<evidence type="ECO:0000255" key="3">
    <source>
        <dbReference type="PROSITE-ProRule" id="PRU00407"/>
    </source>
</evidence>
<evidence type="ECO:0000255" key="4">
    <source>
        <dbReference type="PROSITE-ProRule" id="PRU01189"/>
    </source>
</evidence>
<evidence type="ECO:0000256" key="5">
    <source>
        <dbReference type="SAM" id="MobiDB-lite"/>
    </source>
</evidence>
<evidence type="ECO:0000303" key="6">
    <source>
    </source>
</evidence>
<evidence type="ECO:0000303" key="7">
    <source>
    </source>
</evidence>
<evidence type="ECO:0000305" key="8"/>